<name>SHCAF_CHICK</name>
<accession>Q5ZJV7</accession>
<dbReference type="EMBL" id="AJ720327">
    <property type="protein sequence ID" value="CAG31986.1"/>
    <property type="molecule type" value="mRNA"/>
</dbReference>
<dbReference type="RefSeq" id="NP_001025937.1">
    <property type="nucleotide sequence ID" value="NM_001030766.1"/>
</dbReference>
<dbReference type="FunCoup" id="Q5ZJV7">
    <property type="interactions" value="462"/>
</dbReference>
<dbReference type="STRING" id="9031.ENSGALP00000066401"/>
<dbReference type="PaxDb" id="9031-ENSGALP00000021084"/>
<dbReference type="GeneID" id="418140"/>
<dbReference type="KEGG" id="gga:418140"/>
<dbReference type="CTD" id="418140"/>
<dbReference type="VEuPathDB" id="HostDB:geneid_418140"/>
<dbReference type="eggNOG" id="ENOG502QSAG">
    <property type="taxonomic scope" value="Eukaryota"/>
</dbReference>
<dbReference type="InParanoid" id="Q5ZJV7"/>
<dbReference type="OrthoDB" id="10023333at2759"/>
<dbReference type="PhylomeDB" id="Q5ZJV7"/>
<dbReference type="PRO" id="PR:Q5ZJV7"/>
<dbReference type="Proteomes" id="UP000000539">
    <property type="component" value="Unassembled WGS sequence"/>
</dbReference>
<dbReference type="GO" id="GO:0070822">
    <property type="term" value="C:Sin3-type complex"/>
    <property type="evidence" value="ECO:0000250"/>
    <property type="project" value="UniProtKB"/>
</dbReference>
<dbReference type="GO" id="GO:0045596">
    <property type="term" value="P:negative regulation of cell differentiation"/>
    <property type="evidence" value="ECO:0000250"/>
    <property type="project" value="UniProtKB"/>
</dbReference>
<dbReference type="GO" id="GO:0030336">
    <property type="term" value="P:negative regulation of cell migration"/>
    <property type="evidence" value="ECO:0000250"/>
    <property type="project" value="UniProtKB"/>
</dbReference>
<dbReference type="GO" id="GO:0008284">
    <property type="term" value="P:positive regulation of cell population proliferation"/>
    <property type="evidence" value="ECO:0000250"/>
    <property type="project" value="UniProtKB"/>
</dbReference>
<dbReference type="InterPro" id="IPR026065">
    <property type="entry name" value="FAM60A"/>
</dbReference>
<dbReference type="PANTHER" id="PTHR13422">
    <property type="entry name" value="SIN3-HDAC COMPLEX-ASSOCIATED FACTOR"/>
    <property type="match status" value="1"/>
</dbReference>
<dbReference type="PANTHER" id="PTHR13422:SF12">
    <property type="entry name" value="SIN3-HDAC COMPLEX-ASSOCIATED FACTOR"/>
    <property type="match status" value="1"/>
</dbReference>
<dbReference type="Pfam" id="PF15396">
    <property type="entry name" value="FAM60A"/>
    <property type="match status" value="1"/>
</dbReference>
<evidence type="ECO:0000250" key="1">
    <source>
        <dbReference type="UniProtKB" id="Q8C8M1"/>
    </source>
</evidence>
<evidence type="ECO:0000250" key="2">
    <source>
        <dbReference type="UniProtKB" id="Q9NP50"/>
    </source>
</evidence>
<evidence type="ECO:0000256" key="3">
    <source>
        <dbReference type="SAM" id="MobiDB-lite"/>
    </source>
</evidence>
<evidence type="ECO:0000305" key="4"/>
<protein>
    <recommendedName>
        <fullName>SIN3-HDAC complex-associated factor</fullName>
    </recommendedName>
    <alternativeName>
        <fullName>Protein FAM60A</fullName>
    </alternativeName>
    <alternativeName>
        <fullName>Tera protein homolog</fullName>
    </alternativeName>
</protein>
<keyword id="KW-0539">Nucleus</keyword>
<keyword id="KW-1185">Reference proteome</keyword>
<organism>
    <name type="scientific">Gallus gallus</name>
    <name type="common">Chicken</name>
    <dbReference type="NCBI Taxonomy" id="9031"/>
    <lineage>
        <taxon>Eukaryota</taxon>
        <taxon>Metazoa</taxon>
        <taxon>Chordata</taxon>
        <taxon>Craniata</taxon>
        <taxon>Vertebrata</taxon>
        <taxon>Euteleostomi</taxon>
        <taxon>Archelosauria</taxon>
        <taxon>Archosauria</taxon>
        <taxon>Dinosauria</taxon>
        <taxon>Saurischia</taxon>
        <taxon>Theropoda</taxon>
        <taxon>Coelurosauria</taxon>
        <taxon>Aves</taxon>
        <taxon>Neognathae</taxon>
        <taxon>Galloanserae</taxon>
        <taxon>Galliformes</taxon>
        <taxon>Phasianidae</taxon>
        <taxon>Phasianinae</taxon>
        <taxon>Gallus</taxon>
    </lineage>
</organism>
<feature type="chain" id="PRO_0000187089" description="SIN3-HDAC complex-associated factor">
    <location>
        <begin position="1"/>
        <end position="222"/>
    </location>
</feature>
<feature type="region of interest" description="Disordered" evidence="3">
    <location>
        <begin position="111"/>
        <end position="154"/>
    </location>
</feature>
<feature type="region of interest" description="Disordered" evidence="3">
    <location>
        <begin position="199"/>
        <end position="222"/>
    </location>
</feature>
<feature type="compositionally biased region" description="Basic and acidic residues" evidence="3">
    <location>
        <begin position="111"/>
        <end position="121"/>
    </location>
</feature>
<feature type="compositionally biased region" description="Low complexity" evidence="3">
    <location>
        <begin position="124"/>
        <end position="135"/>
    </location>
</feature>
<feature type="compositionally biased region" description="Polar residues" evidence="3">
    <location>
        <begin position="136"/>
        <end position="154"/>
    </location>
</feature>
<feature type="compositionally biased region" description="Polar residues" evidence="3">
    <location>
        <begin position="210"/>
        <end position="222"/>
    </location>
</feature>
<comment type="function">
    <text evidence="1 2">Subunit of the Sin3 deacetylase complex (Sin3/HDAC), this subunit is important for the repression of genes encoding components of the TGF-beta signaling pathway. Core component of a SIN3A complex (composed of at least SINHCAF, SIN3A, HDAC1, SAP30, RBBP4, OGT and TET1) present in embryonic stem (ES) cells and is essential to maintain the complex on chromatin.</text>
</comment>
<comment type="subunit">
    <text evidence="1 2">Component of the Sin3/HDAC corepressor complex at least composed of BRMS1, BRMS1L, ING2, SAP30, SAP30L, HDAC1. Found in a complex composed of at least SINHCAF, SIN3A, HDAC1, SAP30, RBBP4, OGT and TET1.</text>
</comment>
<comment type="subcellular location">
    <subcellularLocation>
        <location evidence="1">Nucleus</location>
    </subcellularLocation>
</comment>
<comment type="similarity">
    <text evidence="4">Belongs to the SINHCAF family.</text>
</comment>
<sequence>MFGFRKPKMYRSIEGCCICRAKSSSSRFTDSKRYEKDFQNCFGLHEARSGDICNACVLLVKRWKKLPAGSKKNWNHVVDARAGPSLKTTLKPKKMKTLSGSRIKSNQISKLQKEFKRHNSDAHSTTSSASPAQSPCYSNQSDEGSDTEMSAGSSRTPVFSFLDLTYWKRQKVCCGIIYKGRFGEVLIDTHLFKPCCSNKKSATEKPEQEGPQSPAISTQEEW</sequence>
<proteinExistence type="evidence at transcript level"/>
<reference key="1">
    <citation type="journal article" date="2005" name="Genome Biol.">
        <title>Full-length cDNAs from chicken bursal lymphocytes to facilitate gene function analysis.</title>
        <authorList>
            <person name="Caldwell R.B."/>
            <person name="Kierzek A.M."/>
            <person name="Arakawa H."/>
            <person name="Bezzubov Y."/>
            <person name="Zaim J."/>
            <person name="Fiedler P."/>
            <person name="Kutter S."/>
            <person name="Blagodatski A."/>
            <person name="Kostovska D."/>
            <person name="Koter M."/>
            <person name="Plachy J."/>
            <person name="Carninci P."/>
            <person name="Hayashizaki Y."/>
            <person name="Buerstedde J.-M."/>
        </authorList>
    </citation>
    <scope>NUCLEOTIDE SEQUENCE [LARGE SCALE MRNA]</scope>
    <source>
        <strain>CB</strain>
        <tissue>Bursa of Fabricius</tissue>
    </source>
</reference>
<gene>
    <name type="primary">SINHCAF</name>
    <name type="synonym">FAM60A</name>
    <name type="ORF">RCJMB04_15g2</name>
</gene>